<organismHost>
    <name type="scientific">Escherichia coli</name>
    <dbReference type="NCBI Taxonomy" id="562"/>
</organismHost>
<feature type="initiator methionine" description="Removed; by host" evidence="1">
    <location>
        <position position="1"/>
    </location>
</feature>
<feature type="chain" id="PRO_0000164888" description="Capsid protein F">
    <location>
        <begin position="2"/>
        <end position="427"/>
    </location>
</feature>
<feature type="strand" evidence="3">
    <location>
        <begin position="17"/>
        <end position="23"/>
    </location>
</feature>
<feature type="strand" evidence="3">
    <location>
        <begin position="25"/>
        <end position="27"/>
    </location>
</feature>
<feature type="strand" evidence="3">
    <location>
        <begin position="29"/>
        <end position="36"/>
    </location>
</feature>
<feature type="strand" evidence="3">
    <location>
        <begin position="41"/>
        <end position="52"/>
    </location>
</feature>
<feature type="strand" evidence="3">
    <location>
        <begin position="55"/>
        <end position="58"/>
    </location>
</feature>
<feature type="strand" evidence="3">
    <location>
        <begin position="63"/>
        <end position="74"/>
    </location>
</feature>
<feature type="helix" evidence="3">
    <location>
        <begin position="75"/>
        <end position="78"/>
    </location>
</feature>
<feature type="helix" evidence="3">
    <location>
        <begin position="80"/>
        <end position="88"/>
    </location>
</feature>
<feature type="helix" evidence="3">
    <location>
        <begin position="89"/>
        <end position="91"/>
    </location>
</feature>
<feature type="helix" evidence="3">
    <location>
        <begin position="108"/>
        <end position="110"/>
    </location>
</feature>
<feature type="strand" evidence="3">
    <location>
        <begin position="118"/>
        <end position="120"/>
    </location>
</feature>
<feature type="helix" evidence="3">
    <location>
        <begin position="122"/>
        <end position="135"/>
    </location>
</feature>
<feature type="helix" evidence="3">
    <location>
        <begin position="149"/>
        <end position="151"/>
    </location>
</feature>
<feature type="turn" evidence="3">
    <location>
        <begin position="154"/>
        <end position="159"/>
    </location>
</feature>
<feature type="helix" evidence="3">
    <location>
        <begin position="193"/>
        <end position="211"/>
    </location>
</feature>
<feature type="helix" evidence="3">
    <location>
        <begin position="216"/>
        <end position="221"/>
    </location>
</feature>
<feature type="turn" evidence="3">
    <location>
        <begin position="222"/>
        <end position="224"/>
    </location>
</feature>
<feature type="turn" evidence="3">
    <location>
        <begin position="229"/>
        <end position="233"/>
    </location>
</feature>
<feature type="strand" evidence="3">
    <location>
        <begin position="236"/>
        <end position="245"/>
    </location>
</feature>
<feature type="strand" evidence="3">
    <location>
        <begin position="248"/>
        <end position="251"/>
    </location>
</feature>
<feature type="turn" evidence="3">
    <location>
        <begin position="255"/>
        <end position="259"/>
    </location>
</feature>
<feature type="strand" evidence="3">
    <location>
        <begin position="261"/>
        <end position="264"/>
    </location>
</feature>
<feature type="strand" evidence="3">
    <location>
        <begin position="266"/>
        <end position="277"/>
    </location>
</feature>
<feature type="strand" evidence="3">
    <location>
        <begin position="280"/>
        <end position="291"/>
    </location>
</feature>
<feature type="helix" evidence="3">
    <location>
        <begin position="302"/>
        <end position="305"/>
    </location>
</feature>
<feature type="strand" evidence="3">
    <location>
        <begin position="306"/>
        <end position="308"/>
    </location>
</feature>
<feature type="helix" evidence="3">
    <location>
        <begin position="311"/>
        <end position="314"/>
    </location>
</feature>
<feature type="helix" evidence="3">
    <location>
        <begin position="318"/>
        <end position="321"/>
    </location>
</feature>
<feature type="strand" evidence="3">
    <location>
        <begin position="327"/>
        <end position="330"/>
    </location>
</feature>
<feature type="turn" evidence="3">
    <location>
        <begin position="331"/>
        <end position="334"/>
    </location>
</feature>
<feature type="strand" evidence="3">
    <location>
        <begin position="335"/>
        <end position="337"/>
    </location>
</feature>
<feature type="strand" evidence="3">
    <location>
        <begin position="343"/>
        <end position="346"/>
    </location>
</feature>
<feature type="helix" evidence="3">
    <location>
        <begin position="350"/>
        <end position="352"/>
    </location>
</feature>
<feature type="turn" evidence="3">
    <location>
        <begin position="361"/>
        <end position="365"/>
    </location>
</feature>
<feature type="helix" evidence="3">
    <location>
        <begin position="381"/>
        <end position="383"/>
    </location>
</feature>
<feature type="helix" evidence="3">
    <location>
        <begin position="388"/>
        <end position="394"/>
    </location>
</feature>
<feature type="strand" evidence="3">
    <location>
        <begin position="395"/>
        <end position="397"/>
    </location>
</feature>
<feature type="strand" evidence="3">
    <location>
        <begin position="402"/>
        <end position="414"/>
    </location>
</feature>
<feature type="helix" evidence="3">
    <location>
        <begin position="420"/>
        <end position="423"/>
    </location>
</feature>
<keyword id="KW-0002">3D-structure</keyword>
<keyword id="KW-0167">Capsid protein</keyword>
<keyword id="KW-1185">Reference proteome</keyword>
<keyword id="KW-1140">T=1 icosahedral capsid protein</keyword>
<keyword id="KW-1171">Viral genome ejection through host cell envelope</keyword>
<keyword id="KW-1162">Viral penetration into host cytoplasm</keyword>
<keyword id="KW-0946">Virion</keyword>
<keyword id="KW-1160">Virus entry into host cell</keyword>
<evidence type="ECO:0000250" key="1">
    <source>
        <dbReference type="UniProtKB" id="P03641"/>
    </source>
</evidence>
<evidence type="ECO:0000305" key="2"/>
<evidence type="ECO:0007829" key="3">
    <source>
        <dbReference type="PDB" id="1GFF"/>
    </source>
</evidence>
<protein>
    <recommendedName>
        <fullName>Capsid protein F</fullName>
    </recommendedName>
    <alternativeName>
        <fullName>F protein</fullName>
    </alternativeName>
    <alternativeName>
        <fullName>GPF</fullName>
    </alternativeName>
</protein>
<gene>
    <name type="primary">F</name>
</gene>
<organism>
    <name type="scientific">Escherichia phage G4</name>
    <name type="common">Bacteriophage G4</name>
    <dbReference type="NCBI Taxonomy" id="10843"/>
    <lineage>
        <taxon>Viruses</taxon>
        <taxon>Monodnaviria</taxon>
        <taxon>Sangervirae</taxon>
        <taxon>Phixviricota</taxon>
        <taxon>Malgrandaviricetes</taxon>
        <taxon>Petitvirales</taxon>
        <taxon>Microviridae</taxon>
        <taxon>Bullavirinae</taxon>
        <taxon>Gequatrovirus</taxon>
        <taxon>Gequatrovirus G4</taxon>
    </lineage>
</organism>
<reference key="1">
    <citation type="journal article" date="1978" name="Nature">
        <title>Nucleotide sequence of bacteriophage G4 DNA.</title>
        <authorList>
            <person name="Godson G.N."/>
            <person name="Barrell B.G."/>
            <person name="Staden R."/>
            <person name="Fiddes J.C."/>
        </authorList>
    </citation>
    <scope>NUCLEOTIDE SEQUENCE [GENOMIC DNA]</scope>
</reference>
<reference key="2">
    <citation type="journal article" date="1996" name="J. Mol. Biol.">
        <title>Atomic structure of the degraded procapsid particle of the bacteriophage G4: induced structural changes in the presence of calcium ions and functional implications.</title>
        <authorList>
            <person name="McKenna R."/>
            <person name="Bowman B.R."/>
            <person name="Iiag L.L."/>
            <person name="Rossmann M.G."/>
            <person name="Fane B.A."/>
        </authorList>
    </citation>
    <scope>X-RAY CRYSTALLOGRAPHY (3.0 ANGSTROMS)</scope>
    <scope>SEQUENCE REVISION TO 36-37; 69 AND 282</scope>
</reference>
<sequence length="427" mass="48703">MSNVQTSADRVPHDLSHLVFEAGKIGRLKTISWTPVVAGDSFECDMVGAIRLSPLRRGLAVDSRVDIFSFYIPHRHIYGQQWINFMKDGVNASPLPPVTCSSGWDSAAYLGTIPSSTLKVPKFLHQGYLNIYNNYFKPPWSDDLTYANPSNMPSEDYKWGVRVANLKSIWTAPLPPDTRTSENMTTGTSTIDIMGLQAAYAKLHTEQERDYFMTRYRDIMKEFGGHTSYDGDNRPLLLMRSEFWASGYDVDGTDQSSLGQFSGRVQQTFNHKVPRFYVPEHGVIMTLAVTRFPPTHEMEMHYLVGKENLTYTDIACDPALMANLPPREVSLKEFFHSSPDSAKFKIAEGQWYRTQPDRVAFPYNALDGFPFYSALPSTELKDRVLVNTNNYDEIFQSMQLAHWNMQTKFNINVYRHMPTTRDSIMTS</sequence>
<dbReference type="EMBL" id="V00657">
    <property type="protein sequence ID" value="CAA24019.1"/>
    <property type="molecule type" value="Genomic_DNA"/>
</dbReference>
<dbReference type="PIR" id="A04250">
    <property type="entry name" value="ZFBPG4"/>
</dbReference>
<dbReference type="PDB" id="1GFF">
    <property type="method" value="X-ray"/>
    <property type="resolution" value="3.00 A"/>
    <property type="chains" value="1=2-427"/>
</dbReference>
<dbReference type="PDBsum" id="1GFF"/>
<dbReference type="SMR" id="P03642"/>
<dbReference type="DIP" id="DIP-6177N"/>
<dbReference type="MINT" id="P03642"/>
<dbReference type="EvolutionaryTrace" id="P03642"/>
<dbReference type="Proteomes" id="UP000002140">
    <property type="component" value="Segment"/>
</dbReference>
<dbReference type="GO" id="GO:0039615">
    <property type="term" value="C:T=1 icosahedral viral capsid"/>
    <property type="evidence" value="ECO:0007669"/>
    <property type="project" value="UniProtKB-KW"/>
</dbReference>
<dbReference type="GO" id="GO:0005198">
    <property type="term" value="F:structural molecule activity"/>
    <property type="evidence" value="ECO:0007669"/>
    <property type="project" value="InterPro"/>
</dbReference>
<dbReference type="GO" id="GO:0046718">
    <property type="term" value="P:symbiont entry into host cell"/>
    <property type="evidence" value="ECO:0007669"/>
    <property type="project" value="UniProtKB-KW"/>
</dbReference>
<dbReference type="Gene3D" id="2.60.169.10">
    <property type="entry name" value="Microviridae F protein"/>
    <property type="match status" value="1"/>
</dbReference>
<dbReference type="InterPro" id="IPR016184">
    <property type="entry name" value="Capsid/spike_ssDNA_virus"/>
</dbReference>
<dbReference type="InterPro" id="IPR003514">
    <property type="entry name" value="Microviridae_protein_F"/>
</dbReference>
<dbReference type="InterPro" id="IPR037002">
    <property type="entry name" value="Microviridae_protein_F_sf"/>
</dbReference>
<dbReference type="Pfam" id="PF02305">
    <property type="entry name" value="Phage_F"/>
    <property type="match status" value="1"/>
</dbReference>
<dbReference type="SUPFAM" id="SSF88645">
    <property type="entry name" value="ssDNA viruses"/>
    <property type="match status" value="1"/>
</dbReference>
<name>CAPSD_BPG4</name>
<proteinExistence type="evidence at protein level"/>
<accession>P03642</accession>
<comment type="function">
    <text evidence="1">Assembles to form an icosahedral capsid with a T=1 symmetry, about 30 nm in diameter, and consisting of 60 capsid proteins F. Upon virus binding to host cell, one of the spikes dissociates from the capsid and the virus interacts with LPS through the exposed EF loops on the F proteins. After the genome had been ejected, the channel formed by the F proteins at the unique fivefold axis remains open.</text>
</comment>
<comment type="subunit">
    <text evidence="1">Pentamerizes and interacts with H protein, G and B pentamers to form 12S pre-assembly complex. By binding with protein D, induces joining of twelve 12S complex to form the procapsid. The procapsid has an external scaffold made of 240 copies of protein D, 60 copies of the internally located B protein, and contains 60 copies of each of the viral structural proteins F and G. Upon genome packaging, interacts with protein J. The mature virion is composed of 60 copies each of the F, G, and J proteins, and 12 copies of the H protein.</text>
</comment>
<comment type="subcellular location">
    <subcellularLocation>
        <location evidence="1">Virion</location>
    </subcellularLocation>
</comment>
<comment type="similarity">
    <text evidence="2">Belongs to the microviridae F protein family.</text>
</comment>